<comment type="function">
    <text evidence="5">Component of ribonuclease P, a protein complex that generates mature tRNA molecules by cleaving their 5'-ends. Also a component of RNase MRP, which cleaves pre-rRNA sequences.</text>
</comment>
<comment type="catalytic activity">
    <reaction>
        <text>Endonucleolytic cleavage of RNA, removing 5'-extranucleotides from tRNA precursor.</text>
        <dbReference type="EC" id="3.1.26.5"/>
    </reaction>
</comment>
<comment type="subunit">
    <text evidence="4 5">Component of nuclear RNase P and RNase MRP complexes. RNase P consists of an RNA moiety and at least 9 protein subunits including POP1, POP3, POP4, POP5, POP6, POP7, POP8, RPP1 and RPR2. RNase MRP complex consists of an RNA moiety and at least 10 protein subunits including POP1, POP3, POP4, POP5, POP6, POP7, POP8, RMP1, RPP1 and SNM1, many of which are shared with the RNase P complex.</text>
</comment>
<comment type="interaction">
    <interactant intactId="EBI-13662">
        <id>P53218</id>
    </interactant>
    <interactant intactId="EBI-13621">
        <id>P41812</id>
        <label>POP1</label>
    </interactant>
    <organismsDiffer>false</organismsDiffer>
    <experiments>6</experiments>
</comment>
<comment type="interaction">
    <interactant intactId="EBI-13662">
        <id>P53218</id>
    </interactant>
    <interactant intactId="EBI-13646">
        <id>P38336</id>
        <label>POP4</label>
    </interactant>
    <organismsDiffer>false</organismsDiffer>
    <experiments>5</experiments>
</comment>
<comment type="interaction">
    <interactant intactId="EBI-13662">
        <id>P53218</id>
    </interactant>
    <interactant intactId="EBI-13654">
        <id>P28005</id>
        <label>POP5</label>
    </interactant>
    <organismsDiffer>false</organismsDiffer>
    <experiments>3</experiments>
</comment>
<comment type="interaction">
    <interactant intactId="EBI-13662">
        <id>P53218</id>
    </interactant>
    <interactant intactId="EBI-13670">
        <id>P38291</id>
        <label>POP7</label>
    </interactant>
    <organismsDiffer>false</organismsDiffer>
    <experiments>4</experiments>
</comment>
<comment type="interaction">
    <interactant intactId="EBI-13662">
        <id>P53218</id>
    </interactant>
    <interactant intactId="EBI-25408">
        <id>P40571</id>
        <label>RPR2</label>
    </interactant>
    <organismsDiffer>false</organismsDiffer>
    <experiments>3</experiments>
</comment>
<comment type="subcellular location">
    <subcellularLocation>
        <location evidence="2">Nucleus</location>
    </subcellularLocation>
</comment>
<comment type="miscellaneous">
    <text evidence="3">Present with 3180 molecules/cell in log phase SD medium.</text>
</comment>
<protein>
    <recommendedName>
        <fullName>Ribonucleases P/MRP protein subunit POP6</fullName>
        <ecNumber>3.1.26.5</ecNumber>
    </recommendedName>
    <alternativeName>
        <fullName>RNA-processing protein POP6</fullName>
    </alternativeName>
    <alternativeName>
        <fullName>RNases P/MRP 18.2 kDa subunit</fullName>
    </alternativeName>
</protein>
<reference key="1">
    <citation type="journal article" date="1997" name="Yeast">
        <title>Sequence analysis of 203 kilobases from Saccharomyces cerevisiae chromosome VII.</title>
        <authorList>
            <person name="Rieger M."/>
            <person name="Brueckner M."/>
            <person name="Schaefer M."/>
            <person name="Mueller-Auer S."/>
        </authorList>
    </citation>
    <scope>NUCLEOTIDE SEQUENCE [GENOMIC DNA]</scope>
    <source>
        <strain>ATCC 204508 / S288c</strain>
    </source>
</reference>
<reference key="2">
    <citation type="journal article" date="1997" name="Nature">
        <title>The nucleotide sequence of Saccharomyces cerevisiae chromosome VII.</title>
        <authorList>
            <person name="Tettelin H."/>
            <person name="Agostoni-Carbone M.L."/>
            <person name="Albermann K."/>
            <person name="Albers M."/>
            <person name="Arroyo J."/>
            <person name="Backes U."/>
            <person name="Barreiros T."/>
            <person name="Bertani I."/>
            <person name="Bjourson A.J."/>
            <person name="Brueckner M."/>
            <person name="Bruschi C.V."/>
            <person name="Carignani G."/>
            <person name="Castagnoli L."/>
            <person name="Cerdan E."/>
            <person name="Clemente M.L."/>
            <person name="Coblenz A."/>
            <person name="Coglievina M."/>
            <person name="Coissac E."/>
            <person name="Defoor E."/>
            <person name="Del Bino S."/>
            <person name="Delius H."/>
            <person name="Delneri D."/>
            <person name="de Wergifosse P."/>
            <person name="Dujon B."/>
            <person name="Durand P."/>
            <person name="Entian K.-D."/>
            <person name="Eraso P."/>
            <person name="Escribano V."/>
            <person name="Fabiani L."/>
            <person name="Fartmann B."/>
            <person name="Feroli F."/>
            <person name="Feuermann M."/>
            <person name="Frontali L."/>
            <person name="Garcia-Gonzalez M."/>
            <person name="Garcia-Saez M.I."/>
            <person name="Goffeau A."/>
            <person name="Guerreiro P."/>
            <person name="Hani J."/>
            <person name="Hansen M."/>
            <person name="Hebling U."/>
            <person name="Hernandez K."/>
            <person name="Heumann K."/>
            <person name="Hilger F."/>
            <person name="Hofmann B."/>
            <person name="Indge K.J."/>
            <person name="James C.M."/>
            <person name="Klima R."/>
            <person name="Koetter P."/>
            <person name="Kramer B."/>
            <person name="Kramer W."/>
            <person name="Lauquin G."/>
            <person name="Leuther H."/>
            <person name="Louis E.J."/>
            <person name="Maillier E."/>
            <person name="Marconi A."/>
            <person name="Martegani E."/>
            <person name="Mazon M.J."/>
            <person name="Mazzoni C."/>
            <person name="McReynolds A.D.K."/>
            <person name="Melchioretto P."/>
            <person name="Mewes H.-W."/>
            <person name="Minenkova O."/>
            <person name="Mueller-Auer S."/>
            <person name="Nawrocki A."/>
            <person name="Netter P."/>
            <person name="Neu R."/>
            <person name="Nombela C."/>
            <person name="Oliver S.G."/>
            <person name="Panzeri L."/>
            <person name="Paoluzi S."/>
            <person name="Plevani P."/>
            <person name="Portetelle D."/>
            <person name="Portillo F."/>
            <person name="Potier S."/>
            <person name="Purnelle B."/>
            <person name="Rieger M."/>
            <person name="Riles L."/>
            <person name="Rinaldi T."/>
            <person name="Robben J."/>
            <person name="Rodrigues-Pousada C."/>
            <person name="Rodriguez-Belmonte E."/>
            <person name="Rodriguez-Torres A.M."/>
            <person name="Rose M."/>
            <person name="Ruzzi M."/>
            <person name="Saliola M."/>
            <person name="Sanchez-Perez M."/>
            <person name="Schaefer B."/>
            <person name="Schaefer M."/>
            <person name="Scharfe M."/>
            <person name="Schmidheini T."/>
            <person name="Schreer A."/>
            <person name="Skala J."/>
            <person name="Souciet J.-L."/>
            <person name="Steensma H.Y."/>
            <person name="Talla E."/>
            <person name="Thierry A."/>
            <person name="Vandenbol M."/>
            <person name="van der Aart Q.J.M."/>
            <person name="Van Dyck L."/>
            <person name="Vanoni M."/>
            <person name="Verhasselt P."/>
            <person name="Voet M."/>
            <person name="Volckaert G."/>
            <person name="Wambutt R."/>
            <person name="Watson M.D."/>
            <person name="Weber N."/>
            <person name="Wedler E."/>
            <person name="Wedler H."/>
            <person name="Wipfli P."/>
            <person name="Wolf K."/>
            <person name="Wright L.F."/>
            <person name="Zaccaria P."/>
            <person name="Zimmermann M."/>
            <person name="Zollner A."/>
            <person name="Kleine K."/>
        </authorList>
    </citation>
    <scope>NUCLEOTIDE SEQUENCE [LARGE SCALE GENOMIC DNA]</scope>
    <source>
        <strain>ATCC 204508 / S288c</strain>
    </source>
</reference>
<reference key="3">
    <citation type="journal article" date="2014" name="G3 (Bethesda)">
        <title>The reference genome sequence of Saccharomyces cerevisiae: Then and now.</title>
        <authorList>
            <person name="Engel S.R."/>
            <person name="Dietrich F.S."/>
            <person name="Fisk D.G."/>
            <person name="Binkley G."/>
            <person name="Balakrishnan R."/>
            <person name="Costanzo M.C."/>
            <person name="Dwight S.S."/>
            <person name="Hitz B.C."/>
            <person name="Karra K."/>
            <person name="Nash R.S."/>
            <person name="Weng S."/>
            <person name="Wong E.D."/>
            <person name="Lloyd P."/>
            <person name="Skrzypek M.S."/>
            <person name="Miyasato S.R."/>
            <person name="Simison M."/>
            <person name="Cherry J.M."/>
        </authorList>
    </citation>
    <scope>GENOME REANNOTATION</scope>
    <source>
        <strain>ATCC 204508 / S288c</strain>
    </source>
</reference>
<reference key="4">
    <citation type="journal article" date="2007" name="Genome Res.">
        <title>Approaching a complete repository of sequence-verified protein-encoding clones for Saccharomyces cerevisiae.</title>
        <authorList>
            <person name="Hu Y."/>
            <person name="Rolfs A."/>
            <person name="Bhullar B."/>
            <person name="Murthy T.V.S."/>
            <person name="Zhu C."/>
            <person name="Berger M.F."/>
            <person name="Camargo A.A."/>
            <person name="Kelley F."/>
            <person name="McCarron S."/>
            <person name="Jepson D."/>
            <person name="Richardson A."/>
            <person name="Raphael J."/>
            <person name="Moreira D."/>
            <person name="Taycher E."/>
            <person name="Zuo D."/>
            <person name="Mohr S."/>
            <person name="Kane M.F."/>
            <person name="Williamson J."/>
            <person name="Simpson A.J.G."/>
            <person name="Bulyk M.L."/>
            <person name="Harlow E."/>
            <person name="Marsischky G."/>
            <person name="Kolodner R.D."/>
            <person name="LaBaer J."/>
        </authorList>
    </citation>
    <scope>NUCLEOTIDE SEQUENCE [GENOMIC DNA]</scope>
    <source>
        <strain>ATCC 204508 / S288c</strain>
    </source>
</reference>
<reference key="5">
    <citation type="journal article" date="1998" name="Genes Dev.">
        <title>Purification and characterization of the nuclear RNase P holoenzyme complex reveals extensive subunit overlap with RNase MRP.</title>
        <authorList>
            <person name="Chamberlain J.R."/>
            <person name="Lee Y."/>
            <person name="Lane W.S."/>
            <person name="Engelke D.R."/>
        </authorList>
    </citation>
    <scope>FUNCTION</scope>
    <scope>IDENTIFICATION IN THE RNASE P COMPLEX BY MASS SPECTROMETRY</scope>
</reference>
<reference key="6">
    <citation type="journal article" date="2003" name="Mol. Cell">
        <title>Assigning function to yeast proteins by integration of technologies.</title>
        <authorList>
            <person name="Hazbun T.R."/>
            <person name="Malmstroem L."/>
            <person name="Anderson S."/>
            <person name="Graczyk B.J."/>
            <person name="Fox B."/>
            <person name="Riffle M."/>
            <person name="Sundin B.A."/>
            <person name="Aranda J.D."/>
            <person name="McDonald W.H."/>
            <person name="Chiu C.-H."/>
            <person name="Snydsman B.E."/>
            <person name="Bradley P."/>
            <person name="Muller E.G.D."/>
            <person name="Fields S."/>
            <person name="Baker D."/>
            <person name="Yates J.R. III"/>
            <person name="Davis T.N."/>
        </authorList>
    </citation>
    <scope>IDENTIFICATION BY MASS SPECTROMETRY</scope>
</reference>
<reference key="7">
    <citation type="journal article" date="2003" name="Nature">
        <title>Global analysis of protein localization in budding yeast.</title>
        <authorList>
            <person name="Huh W.-K."/>
            <person name="Falvo J.V."/>
            <person name="Gerke L.C."/>
            <person name="Carroll A.S."/>
            <person name="Howson R.W."/>
            <person name="Weissman J.S."/>
            <person name="O'Shea E.K."/>
        </authorList>
    </citation>
    <scope>SUBCELLULAR LOCATION [LARGE SCALE ANALYSIS]</scope>
</reference>
<reference key="8">
    <citation type="journal article" date="2003" name="Nature">
        <title>Global analysis of protein expression in yeast.</title>
        <authorList>
            <person name="Ghaemmaghami S."/>
            <person name="Huh W.-K."/>
            <person name="Bower K."/>
            <person name="Howson R.W."/>
            <person name="Belle A."/>
            <person name="Dephoure N."/>
            <person name="O'Shea E.K."/>
            <person name="Weissman J.S."/>
        </authorList>
    </citation>
    <scope>LEVEL OF PROTEIN EXPRESSION [LARGE SCALE ANALYSIS]</scope>
</reference>
<reference key="9">
    <citation type="journal article" date="2005" name="J. Biol. Chem.">
        <title>Characterization and purification of Saccharomyces cerevisiae RNase MRP reveals a new unique protein component.</title>
        <authorList>
            <person name="Salinas K."/>
            <person name="Wierzbicki S."/>
            <person name="Zhou L."/>
            <person name="Schmitt M.E."/>
        </authorList>
    </citation>
    <scope>IDENTIFICATION IN THE RNASE MRP COMPLEX BY MASS SPECTROMETRY</scope>
</reference>
<name>POP6_YEAST</name>
<feature type="chain" id="PRO_0000058517" description="Ribonucleases P/MRP protein subunit POP6">
    <location>
        <begin position="1"/>
        <end position="158"/>
    </location>
</feature>
<feature type="coiled-coil region" evidence="1">
    <location>
        <begin position="51"/>
        <end position="71"/>
    </location>
</feature>
<feature type="strand" evidence="7">
    <location>
        <begin position="4"/>
        <end position="7"/>
    </location>
</feature>
<feature type="strand" evidence="7">
    <location>
        <begin position="10"/>
        <end position="12"/>
    </location>
</feature>
<feature type="helix" evidence="7">
    <location>
        <begin position="19"/>
        <end position="28"/>
    </location>
</feature>
<feature type="turn" evidence="7">
    <location>
        <begin position="29"/>
        <end position="34"/>
    </location>
</feature>
<feature type="strand" evidence="7">
    <location>
        <begin position="37"/>
        <end position="40"/>
    </location>
</feature>
<feature type="strand" evidence="7">
    <location>
        <begin position="42"/>
        <end position="48"/>
    </location>
</feature>
<feature type="helix" evidence="7">
    <location>
        <begin position="55"/>
        <end position="65"/>
    </location>
</feature>
<feature type="strand" evidence="6">
    <location>
        <begin position="68"/>
        <end position="70"/>
    </location>
</feature>
<feature type="turn" evidence="7">
    <location>
        <begin position="71"/>
        <end position="74"/>
    </location>
</feature>
<feature type="strand" evidence="7">
    <location>
        <begin position="76"/>
        <end position="84"/>
    </location>
</feature>
<feature type="helix" evidence="7">
    <location>
        <begin position="85"/>
        <end position="87"/>
    </location>
</feature>
<feature type="helix" evidence="7">
    <location>
        <begin position="88"/>
        <end position="103"/>
    </location>
</feature>
<feature type="turn" evidence="7">
    <location>
        <begin position="104"/>
        <end position="106"/>
    </location>
</feature>
<feature type="strand" evidence="7">
    <location>
        <begin position="110"/>
        <end position="123"/>
    </location>
</feature>
<feature type="strand" evidence="8">
    <location>
        <begin position="125"/>
        <end position="128"/>
    </location>
</feature>
<feature type="strand" evidence="7">
    <location>
        <begin position="130"/>
        <end position="144"/>
    </location>
</feature>
<feature type="strand" evidence="7">
    <location>
        <begin position="155"/>
        <end position="157"/>
    </location>
</feature>
<organism>
    <name type="scientific">Saccharomyces cerevisiae (strain ATCC 204508 / S288c)</name>
    <name type="common">Baker's yeast</name>
    <dbReference type="NCBI Taxonomy" id="559292"/>
    <lineage>
        <taxon>Eukaryota</taxon>
        <taxon>Fungi</taxon>
        <taxon>Dikarya</taxon>
        <taxon>Ascomycota</taxon>
        <taxon>Saccharomycotina</taxon>
        <taxon>Saccharomycetes</taxon>
        <taxon>Saccharomycetales</taxon>
        <taxon>Saccharomycetaceae</taxon>
        <taxon>Saccharomyces</taxon>
    </lineage>
</organism>
<keyword id="KW-0002">3D-structure</keyword>
<keyword id="KW-0175">Coiled coil</keyword>
<keyword id="KW-0378">Hydrolase</keyword>
<keyword id="KW-0539">Nucleus</keyword>
<keyword id="KW-1185">Reference proteome</keyword>
<keyword id="KW-0698">rRNA processing</keyword>
<keyword id="KW-0819">tRNA processing</keyword>
<dbReference type="EC" id="3.1.26.5"/>
<dbReference type="EMBL" id="Z72815">
    <property type="protein sequence ID" value="CAA97018.1"/>
    <property type="molecule type" value="Genomic_DNA"/>
</dbReference>
<dbReference type="EMBL" id="AY558324">
    <property type="protein sequence ID" value="AAS56650.1"/>
    <property type="molecule type" value="Genomic_DNA"/>
</dbReference>
<dbReference type="EMBL" id="BK006941">
    <property type="protein sequence ID" value="DAA08126.1"/>
    <property type="molecule type" value="Genomic_DNA"/>
</dbReference>
<dbReference type="PIR" id="S64321">
    <property type="entry name" value="S64321"/>
</dbReference>
<dbReference type="RefSeq" id="NP_011544.1">
    <property type="nucleotide sequence ID" value="NM_001181159.1"/>
</dbReference>
<dbReference type="PDB" id="3IAB">
    <property type="method" value="X-ray"/>
    <property type="resolution" value="2.70 A"/>
    <property type="chains" value="A=1-158"/>
</dbReference>
<dbReference type="PDB" id="6AGB">
    <property type="method" value="EM"/>
    <property type="resolution" value="3.48 A"/>
    <property type="chains" value="F=1-158"/>
</dbReference>
<dbReference type="PDB" id="6AH3">
    <property type="method" value="EM"/>
    <property type="resolution" value="3.48 A"/>
    <property type="chains" value="F=1-158"/>
</dbReference>
<dbReference type="PDB" id="6W6V">
    <property type="method" value="EM"/>
    <property type="resolution" value="3.00 A"/>
    <property type="chains" value="F=1-158"/>
</dbReference>
<dbReference type="PDB" id="7C79">
    <property type="method" value="EM"/>
    <property type="resolution" value="2.50 A"/>
    <property type="chains" value="F=1-158"/>
</dbReference>
<dbReference type="PDB" id="7C7A">
    <property type="method" value="EM"/>
    <property type="resolution" value="2.80 A"/>
    <property type="chains" value="F=1-158"/>
</dbReference>
<dbReference type="PDBsum" id="3IAB"/>
<dbReference type="PDBsum" id="6AGB"/>
<dbReference type="PDBsum" id="6AH3"/>
<dbReference type="PDBsum" id="6W6V"/>
<dbReference type="PDBsum" id="7C79"/>
<dbReference type="PDBsum" id="7C7A"/>
<dbReference type="EMDB" id="EMD-21564"/>
<dbReference type="EMDB" id="EMD-30296"/>
<dbReference type="EMDB" id="EMD-30297"/>
<dbReference type="EMDB" id="EMD-9616"/>
<dbReference type="EMDB" id="EMD-9622"/>
<dbReference type="SMR" id="P53218"/>
<dbReference type="BioGRID" id="33275">
    <property type="interactions" value="37"/>
</dbReference>
<dbReference type="ComplexPortal" id="CPX-1873">
    <property type="entry name" value="Nucleolar ribonuclease P complex"/>
</dbReference>
<dbReference type="ComplexPortal" id="CPX-3284">
    <property type="entry name" value="Nucleolar ribonuclease MRP complex"/>
</dbReference>
<dbReference type="DIP" id="DIP-6775N"/>
<dbReference type="FunCoup" id="P53218">
    <property type="interactions" value="123"/>
</dbReference>
<dbReference type="IntAct" id="P53218">
    <property type="interactions" value="16"/>
</dbReference>
<dbReference type="MINT" id="P53218"/>
<dbReference type="STRING" id="4932.YGR030C"/>
<dbReference type="PaxDb" id="4932-YGR030C"/>
<dbReference type="PeptideAtlas" id="P53218"/>
<dbReference type="EnsemblFungi" id="YGR030C_mRNA">
    <property type="protein sequence ID" value="YGR030C"/>
    <property type="gene ID" value="YGR030C"/>
</dbReference>
<dbReference type="GeneID" id="852918"/>
<dbReference type="KEGG" id="sce:YGR030C"/>
<dbReference type="AGR" id="SGD:S000003262"/>
<dbReference type="SGD" id="S000003262">
    <property type="gene designation" value="POP6"/>
</dbReference>
<dbReference type="VEuPathDB" id="FungiDB:YGR030C"/>
<dbReference type="eggNOG" id="ENOG502S7W4">
    <property type="taxonomic scope" value="Eukaryota"/>
</dbReference>
<dbReference type="HOGENOM" id="CLU_115485_0_0_1"/>
<dbReference type="InParanoid" id="P53218"/>
<dbReference type="OMA" id="KVETHNE"/>
<dbReference type="OrthoDB" id="4033941at2759"/>
<dbReference type="BioCyc" id="YEAST:YGR030C-MONOMER"/>
<dbReference type="BioGRID-ORCS" id="852918">
    <property type="hits" value="0 hits in 10 CRISPR screens"/>
</dbReference>
<dbReference type="CD-CODE" id="7CAF9006">
    <property type="entry name" value="Tam body"/>
</dbReference>
<dbReference type="EvolutionaryTrace" id="P53218"/>
<dbReference type="PRO" id="PR:P53218"/>
<dbReference type="Proteomes" id="UP000002311">
    <property type="component" value="Chromosome VII"/>
</dbReference>
<dbReference type="RNAct" id="P53218">
    <property type="molecule type" value="protein"/>
</dbReference>
<dbReference type="GO" id="GO:0005829">
    <property type="term" value="C:cytosol"/>
    <property type="evidence" value="ECO:0000314"/>
    <property type="project" value="SGD"/>
</dbReference>
<dbReference type="GO" id="GO:0005655">
    <property type="term" value="C:nucleolar ribonuclease P complex"/>
    <property type="evidence" value="ECO:0000314"/>
    <property type="project" value="SGD"/>
</dbReference>
<dbReference type="GO" id="GO:0005634">
    <property type="term" value="C:nucleus"/>
    <property type="evidence" value="ECO:0000314"/>
    <property type="project" value="SGD"/>
</dbReference>
<dbReference type="GO" id="GO:0000172">
    <property type="term" value="C:ribonuclease MRP complex"/>
    <property type="evidence" value="ECO:0000314"/>
    <property type="project" value="SGD"/>
</dbReference>
<dbReference type="GO" id="GO:0005697">
    <property type="term" value="C:telomerase holoenzyme complex"/>
    <property type="evidence" value="ECO:0000314"/>
    <property type="project" value="SGD"/>
</dbReference>
<dbReference type="GO" id="GO:0004526">
    <property type="term" value="F:ribonuclease P activity"/>
    <property type="evidence" value="ECO:0007669"/>
    <property type="project" value="UniProtKB-EC"/>
</dbReference>
<dbReference type="GO" id="GO:0003723">
    <property type="term" value="F:RNA binding"/>
    <property type="evidence" value="ECO:0000314"/>
    <property type="project" value="SGD"/>
</dbReference>
<dbReference type="GO" id="GO:0042134">
    <property type="term" value="F:rRNA primary transcript binding"/>
    <property type="evidence" value="ECO:0000314"/>
    <property type="project" value="SGD"/>
</dbReference>
<dbReference type="GO" id="GO:0034965">
    <property type="term" value="P:intronic box C/D snoRNA processing"/>
    <property type="evidence" value="ECO:0000314"/>
    <property type="project" value="SGD"/>
</dbReference>
<dbReference type="GO" id="GO:0000460">
    <property type="term" value="P:maturation of 5.8S rRNA"/>
    <property type="evidence" value="ECO:0000314"/>
    <property type="project" value="ComplexPortal"/>
</dbReference>
<dbReference type="GO" id="GO:0000294">
    <property type="term" value="P:nuclear-transcribed mRNA catabolic process, RNase MRP-dependent"/>
    <property type="evidence" value="ECO:0000314"/>
    <property type="project" value="SGD"/>
</dbReference>
<dbReference type="GO" id="GO:0006364">
    <property type="term" value="P:rRNA processing"/>
    <property type="evidence" value="ECO:0000315"/>
    <property type="project" value="SGD"/>
</dbReference>
<dbReference type="GO" id="GO:0001682">
    <property type="term" value="P:tRNA 5'-leader removal"/>
    <property type="evidence" value="ECO:0000314"/>
    <property type="project" value="ComplexPortal"/>
</dbReference>
<dbReference type="GO" id="GO:0008033">
    <property type="term" value="P:tRNA processing"/>
    <property type="evidence" value="ECO:0000315"/>
    <property type="project" value="SGD"/>
</dbReference>
<dbReference type="InterPro" id="IPR002775">
    <property type="entry name" value="DNA/RNA-bd_Alba-like"/>
</dbReference>
<dbReference type="Pfam" id="PF01918">
    <property type="entry name" value="Alba"/>
    <property type="match status" value="1"/>
</dbReference>
<sequence>MINGVYYNEISRDLDISSSTQCLRFLKETVIPSLANNGNNSTSIQYHGISKNDNIKKSVNKLDKQINMADRSLGLQQVVCIFSYGPHIQKMLSILEIFKKGYIKNNKKIYQWNKLTSFDIKREGRNELQEERLKVPILVTLVSDSEIIDLNLHSFTKQ</sequence>
<proteinExistence type="evidence at protein level"/>
<evidence type="ECO:0000255" key="1"/>
<evidence type="ECO:0000269" key="2">
    <source>
    </source>
</evidence>
<evidence type="ECO:0000269" key="3">
    <source>
    </source>
</evidence>
<evidence type="ECO:0000269" key="4">
    <source>
    </source>
</evidence>
<evidence type="ECO:0000269" key="5">
    <source>
    </source>
</evidence>
<evidence type="ECO:0007829" key="6">
    <source>
        <dbReference type="PDB" id="6W6V"/>
    </source>
</evidence>
<evidence type="ECO:0007829" key="7">
    <source>
        <dbReference type="PDB" id="7C79"/>
    </source>
</evidence>
<evidence type="ECO:0007829" key="8">
    <source>
        <dbReference type="PDB" id="7C7A"/>
    </source>
</evidence>
<accession>P53218</accession>
<accession>D6VUG5</accession>
<gene>
    <name type="primary">POP6</name>
    <name type="ordered locus">YGR030C</name>
</gene>